<sequence length="513" mass="54925">MTSADAPRPQLKIRLIHLDTGRENVAVMSRRSKALRPEVFSGFSRVEIRRNAKSVLATLLITDDDALVGPDELGLAEPAFRRFGEPAGTFVTVSPATPPDSLDAVRGKIQGRTLSAAEITAIVNDLTRYRYSDMEIAAFLIGAARFMTSDELLALVSAMASVGTQLRWDRPIVVDKHCIGGIPGNRTSMILVPIVAAHGLTIPKTSSRAITSPAGTADTMEVLARVDVSVAEMKEIVAACNGCLIWGGHVNLSPADDILISVERPLCLDTREQMVASIMSKKLAAGSTHLLVDLPVGPTAKVASALDAMRLRKLFEFVGDHFGIAVETITTDGRQPIGNGIGPVLEAQDVMAVLGNDPKAPADLREKSLRLAAHLLEYDPHLRGGAGYARARELLESGAALKQMQKIIDNQGPSTCHKDLGTLTAEVTAERDGVVSAIDCLQLNRLARTAGAPIDKGAGIRLFKKVGDRVEAGEPLYRIYAFDPAERELAVAAAKLACGYTVDDAQTFREQVM</sequence>
<feature type="chain" id="PRO_0000314715" description="Putative thymidine phosphorylase">
    <location>
        <begin position="1"/>
        <end position="513"/>
    </location>
</feature>
<name>TYPH_RHOPB</name>
<evidence type="ECO:0000255" key="1">
    <source>
        <dbReference type="HAMAP-Rule" id="MF_00703"/>
    </source>
</evidence>
<organism>
    <name type="scientific">Rhodopseudomonas palustris (strain BisB18)</name>
    <dbReference type="NCBI Taxonomy" id="316056"/>
    <lineage>
        <taxon>Bacteria</taxon>
        <taxon>Pseudomonadati</taxon>
        <taxon>Pseudomonadota</taxon>
        <taxon>Alphaproteobacteria</taxon>
        <taxon>Hyphomicrobiales</taxon>
        <taxon>Nitrobacteraceae</taxon>
        <taxon>Rhodopseudomonas</taxon>
    </lineage>
</organism>
<reference key="1">
    <citation type="submission" date="2006-03" db="EMBL/GenBank/DDBJ databases">
        <title>Complete sequence of Rhodopseudomonas palustris BisB18.</title>
        <authorList>
            <consortium name="US DOE Joint Genome Institute"/>
            <person name="Copeland A."/>
            <person name="Lucas S."/>
            <person name="Lapidus A."/>
            <person name="Barry K."/>
            <person name="Detter J.C."/>
            <person name="Glavina del Rio T."/>
            <person name="Hammon N."/>
            <person name="Israni S."/>
            <person name="Dalin E."/>
            <person name="Tice H."/>
            <person name="Pitluck S."/>
            <person name="Chain P."/>
            <person name="Malfatti S."/>
            <person name="Shin M."/>
            <person name="Vergez L."/>
            <person name="Schmutz J."/>
            <person name="Larimer F."/>
            <person name="Land M."/>
            <person name="Hauser L."/>
            <person name="Pelletier D.A."/>
            <person name="Kyrpides N."/>
            <person name="Anderson I."/>
            <person name="Oda Y."/>
            <person name="Harwood C.S."/>
            <person name="Richardson P."/>
        </authorList>
    </citation>
    <scope>NUCLEOTIDE SEQUENCE [LARGE SCALE GENOMIC DNA]</scope>
    <source>
        <strain>BisB18</strain>
    </source>
</reference>
<keyword id="KW-0328">Glycosyltransferase</keyword>
<keyword id="KW-0808">Transferase</keyword>
<protein>
    <recommendedName>
        <fullName evidence="1">Putative thymidine phosphorylase</fullName>
        <ecNumber evidence="1">2.4.2.4</ecNumber>
    </recommendedName>
    <alternativeName>
        <fullName evidence="1">TdRPase</fullName>
    </alternativeName>
</protein>
<dbReference type="EC" id="2.4.2.4" evidence="1"/>
<dbReference type="EMBL" id="CP000301">
    <property type="protein sequence ID" value="ABD89615.1"/>
    <property type="molecule type" value="Genomic_DNA"/>
</dbReference>
<dbReference type="SMR" id="Q20Z21"/>
<dbReference type="STRING" id="316056.RPC_4089"/>
<dbReference type="KEGG" id="rpc:RPC_4089"/>
<dbReference type="eggNOG" id="COG0213">
    <property type="taxonomic scope" value="Bacteria"/>
</dbReference>
<dbReference type="HOGENOM" id="CLU_025040_6_0_5"/>
<dbReference type="OrthoDB" id="341217at2"/>
<dbReference type="GO" id="GO:0005829">
    <property type="term" value="C:cytosol"/>
    <property type="evidence" value="ECO:0007669"/>
    <property type="project" value="TreeGrafter"/>
</dbReference>
<dbReference type="GO" id="GO:0004645">
    <property type="term" value="F:1,4-alpha-oligoglucan phosphorylase activity"/>
    <property type="evidence" value="ECO:0007669"/>
    <property type="project" value="InterPro"/>
</dbReference>
<dbReference type="GO" id="GO:0009032">
    <property type="term" value="F:thymidine phosphorylase activity"/>
    <property type="evidence" value="ECO:0007669"/>
    <property type="project" value="UniProtKB-UniRule"/>
</dbReference>
<dbReference type="GO" id="GO:0006206">
    <property type="term" value="P:pyrimidine nucleobase metabolic process"/>
    <property type="evidence" value="ECO:0007669"/>
    <property type="project" value="InterPro"/>
</dbReference>
<dbReference type="GO" id="GO:0006213">
    <property type="term" value="P:pyrimidine nucleoside metabolic process"/>
    <property type="evidence" value="ECO:0007669"/>
    <property type="project" value="InterPro"/>
</dbReference>
<dbReference type="Gene3D" id="1.20.970.50">
    <property type="match status" value="1"/>
</dbReference>
<dbReference type="Gene3D" id="2.40.40.20">
    <property type="match status" value="1"/>
</dbReference>
<dbReference type="Gene3D" id="3.40.1030.10">
    <property type="entry name" value="Nucleoside phosphorylase/phosphoribosyltransferase catalytic domain"/>
    <property type="match status" value="1"/>
</dbReference>
<dbReference type="Gene3D" id="3.90.1170.30">
    <property type="entry name" value="Pyrimidine nucleoside phosphorylase-like, C-terminal domain"/>
    <property type="match status" value="1"/>
</dbReference>
<dbReference type="HAMAP" id="MF_00703">
    <property type="entry name" value="Thymid_phosp_2"/>
    <property type="match status" value="1"/>
</dbReference>
<dbReference type="InterPro" id="IPR000312">
    <property type="entry name" value="Glycosyl_Trfase_fam3"/>
</dbReference>
<dbReference type="InterPro" id="IPR017459">
    <property type="entry name" value="Glycosyl_Trfase_fam3_N_dom"/>
</dbReference>
<dbReference type="InterPro" id="IPR036320">
    <property type="entry name" value="Glycosyl_Trfase_fam3_N_dom_sf"/>
</dbReference>
<dbReference type="InterPro" id="IPR035902">
    <property type="entry name" value="Nuc_phospho_transferase"/>
</dbReference>
<dbReference type="InterPro" id="IPR036566">
    <property type="entry name" value="PYNP-like_C_sf"/>
</dbReference>
<dbReference type="InterPro" id="IPR013102">
    <property type="entry name" value="PYNP_C"/>
</dbReference>
<dbReference type="InterPro" id="IPR017872">
    <property type="entry name" value="Pyrmidine_PPase_CS"/>
</dbReference>
<dbReference type="InterPro" id="IPR028579">
    <property type="entry name" value="Thym_Pase_Put"/>
</dbReference>
<dbReference type="InterPro" id="IPR013466">
    <property type="entry name" value="Thymidine/AMP_Pase"/>
</dbReference>
<dbReference type="InterPro" id="IPR000053">
    <property type="entry name" value="Thymidine/pyrmidine_PPase"/>
</dbReference>
<dbReference type="NCBIfam" id="TIGR02645">
    <property type="entry name" value="ARCH_P_rylase"/>
    <property type="match status" value="1"/>
</dbReference>
<dbReference type="NCBIfam" id="NF003338">
    <property type="entry name" value="PRK04350.1"/>
    <property type="match status" value="1"/>
</dbReference>
<dbReference type="PANTHER" id="PTHR10515">
    <property type="entry name" value="THYMIDINE PHOSPHORYLASE"/>
    <property type="match status" value="1"/>
</dbReference>
<dbReference type="PANTHER" id="PTHR10515:SF0">
    <property type="entry name" value="THYMIDINE PHOSPHORYLASE"/>
    <property type="match status" value="1"/>
</dbReference>
<dbReference type="Pfam" id="PF02885">
    <property type="entry name" value="Glycos_trans_3N"/>
    <property type="match status" value="1"/>
</dbReference>
<dbReference type="Pfam" id="PF00591">
    <property type="entry name" value="Glycos_transf_3"/>
    <property type="match status" value="1"/>
</dbReference>
<dbReference type="Pfam" id="PF07831">
    <property type="entry name" value="PYNP_C"/>
    <property type="match status" value="1"/>
</dbReference>
<dbReference type="SMART" id="SM00941">
    <property type="entry name" value="PYNP_C"/>
    <property type="match status" value="1"/>
</dbReference>
<dbReference type="SUPFAM" id="SSF52418">
    <property type="entry name" value="Nucleoside phosphorylase/phosphoribosyltransferase catalytic domain"/>
    <property type="match status" value="1"/>
</dbReference>
<dbReference type="SUPFAM" id="SSF47648">
    <property type="entry name" value="Nucleoside phosphorylase/phosphoribosyltransferase N-terminal domain"/>
    <property type="match status" value="1"/>
</dbReference>
<dbReference type="SUPFAM" id="SSF54680">
    <property type="entry name" value="Pyrimidine nucleoside phosphorylase C-terminal domain"/>
    <property type="match status" value="1"/>
</dbReference>
<dbReference type="PROSITE" id="PS00647">
    <property type="entry name" value="THYMID_PHOSPHORYLASE"/>
    <property type="match status" value="1"/>
</dbReference>
<gene>
    <name type="ordered locus">RPC_4089</name>
</gene>
<comment type="catalytic activity">
    <reaction evidence="1">
        <text>thymidine + phosphate = 2-deoxy-alpha-D-ribose 1-phosphate + thymine</text>
        <dbReference type="Rhea" id="RHEA:16037"/>
        <dbReference type="ChEBI" id="CHEBI:17748"/>
        <dbReference type="ChEBI" id="CHEBI:17821"/>
        <dbReference type="ChEBI" id="CHEBI:43474"/>
        <dbReference type="ChEBI" id="CHEBI:57259"/>
        <dbReference type="EC" id="2.4.2.4"/>
    </reaction>
</comment>
<comment type="similarity">
    <text evidence="1">Belongs to the thymidine/pyrimidine-nucleoside phosphorylase family. Type 2 subfamily.</text>
</comment>
<proteinExistence type="inferred from homology"/>
<accession>Q20Z21</accession>